<sequence length="67" mass="7799">MAKIKMKTHRGAAKRFKVLKSGKVKRMKAYKSHLLTHKSSKRKRRLRKATYLEGASAKTIKRLLPYS</sequence>
<gene>
    <name evidence="1" type="primary">rpmI</name>
    <name type="ordered locus">TTE1692</name>
</gene>
<organism>
    <name type="scientific">Caldanaerobacter subterraneus subsp. tengcongensis (strain DSM 15242 / JCM 11007 / NBRC 100824 / MB4)</name>
    <name type="common">Thermoanaerobacter tengcongensis</name>
    <dbReference type="NCBI Taxonomy" id="273068"/>
    <lineage>
        <taxon>Bacteria</taxon>
        <taxon>Bacillati</taxon>
        <taxon>Bacillota</taxon>
        <taxon>Clostridia</taxon>
        <taxon>Thermoanaerobacterales</taxon>
        <taxon>Thermoanaerobacteraceae</taxon>
        <taxon>Caldanaerobacter</taxon>
    </lineage>
</organism>
<proteinExistence type="inferred from homology"/>
<feature type="chain" id="PRO_0000177445" description="Large ribosomal subunit protein bL35">
    <location>
        <begin position="1"/>
        <end position="67"/>
    </location>
</feature>
<keyword id="KW-1185">Reference proteome</keyword>
<keyword id="KW-0687">Ribonucleoprotein</keyword>
<keyword id="KW-0689">Ribosomal protein</keyword>
<reference key="1">
    <citation type="journal article" date="2002" name="Genome Res.">
        <title>A complete sequence of the T. tengcongensis genome.</title>
        <authorList>
            <person name="Bao Q."/>
            <person name="Tian Y."/>
            <person name="Li W."/>
            <person name="Xu Z."/>
            <person name="Xuan Z."/>
            <person name="Hu S."/>
            <person name="Dong W."/>
            <person name="Yang J."/>
            <person name="Chen Y."/>
            <person name="Xue Y."/>
            <person name="Xu Y."/>
            <person name="Lai X."/>
            <person name="Huang L."/>
            <person name="Dong X."/>
            <person name="Ma Y."/>
            <person name="Ling L."/>
            <person name="Tan H."/>
            <person name="Chen R."/>
            <person name="Wang J."/>
            <person name="Yu J."/>
            <person name="Yang H."/>
        </authorList>
    </citation>
    <scope>NUCLEOTIDE SEQUENCE [LARGE SCALE GENOMIC DNA]</scope>
    <source>
        <strain>DSM 15242 / JCM 11007 / NBRC 100824 / MB4</strain>
    </source>
</reference>
<evidence type="ECO:0000255" key="1">
    <source>
        <dbReference type="HAMAP-Rule" id="MF_00514"/>
    </source>
</evidence>
<evidence type="ECO:0000305" key="2"/>
<protein>
    <recommendedName>
        <fullName evidence="1">Large ribosomal subunit protein bL35</fullName>
    </recommendedName>
    <alternativeName>
        <fullName evidence="2">50S ribosomal protein L35</fullName>
    </alternativeName>
</protein>
<dbReference type="EMBL" id="AE008691">
    <property type="protein sequence ID" value="AAM24893.1"/>
    <property type="molecule type" value="Genomic_DNA"/>
</dbReference>
<dbReference type="RefSeq" id="WP_011025901.1">
    <property type="nucleotide sequence ID" value="NZ_JANUCV010000001.1"/>
</dbReference>
<dbReference type="SMR" id="Q8R9C3"/>
<dbReference type="STRING" id="273068.TTE1692"/>
<dbReference type="KEGG" id="tte:TTE1692"/>
<dbReference type="eggNOG" id="COG0291">
    <property type="taxonomic scope" value="Bacteria"/>
</dbReference>
<dbReference type="HOGENOM" id="CLU_169643_4_3_9"/>
<dbReference type="OrthoDB" id="47476at2"/>
<dbReference type="Proteomes" id="UP000000555">
    <property type="component" value="Chromosome"/>
</dbReference>
<dbReference type="GO" id="GO:0022625">
    <property type="term" value="C:cytosolic large ribosomal subunit"/>
    <property type="evidence" value="ECO:0007669"/>
    <property type="project" value="TreeGrafter"/>
</dbReference>
<dbReference type="GO" id="GO:0003735">
    <property type="term" value="F:structural constituent of ribosome"/>
    <property type="evidence" value="ECO:0007669"/>
    <property type="project" value="InterPro"/>
</dbReference>
<dbReference type="GO" id="GO:0006412">
    <property type="term" value="P:translation"/>
    <property type="evidence" value="ECO:0007669"/>
    <property type="project" value="UniProtKB-UniRule"/>
</dbReference>
<dbReference type="FunFam" id="4.10.410.60:FF:000001">
    <property type="entry name" value="50S ribosomal protein L35"/>
    <property type="match status" value="1"/>
</dbReference>
<dbReference type="Gene3D" id="4.10.410.60">
    <property type="match status" value="1"/>
</dbReference>
<dbReference type="HAMAP" id="MF_00514">
    <property type="entry name" value="Ribosomal_bL35"/>
    <property type="match status" value="1"/>
</dbReference>
<dbReference type="InterPro" id="IPR001706">
    <property type="entry name" value="Ribosomal_bL35"/>
</dbReference>
<dbReference type="InterPro" id="IPR021137">
    <property type="entry name" value="Ribosomal_bL35-like"/>
</dbReference>
<dbReference type="InterPro" id="IPR018265">
    <property type="entry name" value="Ribosomal_bL35_CS"/>
</dbReference>
<dbReference type="InterPro" id="IPR037229">
    <property type="entry name" value="Ribosomal_bL35_sf"/>
</dbReference>
<dbReference type="NCBIfam" id="TIGR00001">
    <property type="entry name" value="rpmI_bact"/>
    <property type="match status" value="1"/>
</dbReference>
<dbReference type="PANTHER" id="PTHR33343">
    <property type="entry name" value="54S RIBOSOMAL PROTEIN BL35M"/>
    <property type="match status" value="1"/>
</dbReference>
<dbReference type="PANTHER" id="PTHR33343:SF1">
    <property type="entry name" value="LARGE RIBOSOMAL SUBUNIT PROTEIN BL35M"/>
    <property type="match status" value="1"/>
</dbReference>
<dbReference type="Pfam" id="PF01632">
    <property type="entry name" value="Ribosomal_L35p"/>
    <property type="match status" value="1"/>
</dbReference>
<dbReference type="PRINTS" id="PR00064">
    <property type="entry name" value="RIBOSOMALL35"/>
</dbReference>
<dbReference type="SUPFAM" id="SSF143034">
    <property type="entry name" value="L35p-like"/>
    <property type="match status" value="1"/>
</dbReference>
<dbReference type="PROSITE" id="PS00936">
    <property type="entry name" value="RIBOSOMAL_L35"/>
    <property type="match status" value="1"/>
</dbReference>
<name>RL35_CALS4</name>
<comment type="similarity">
    <text evidence="1">Belongs to the bacterial ribosomal protein bL35 family.</text>
</comment>
<accession>Q8R9C3</accession>